<organism>
    <name type="scientific">Chaetosphaeridium globosum</name>
    <name type="common">Charophycean green alga</name>
    <name type="synonym">Herposteiron globosum</name>
    <dbReference type="NCBI Taxonomy" id="96477"/>
    <lineage>
        <taxon>Eukaryota</taxon>
        <taxon>Viridiplantae</taxon>
        <taxon>Streptophyta</taxon>
        <taxon>Coleochaetophyceae</taxon>
        <taxon>Coleochaetales</taxon>
        <taxon>Chaetosphaeridiaceae</taxon>
        <taxon>Chaetosphaeridium</taxon>
    </lineage>
</organism>
<geneLocation type="chloroplast"/>
<protein>
    <recommendedName>
        <fullName evidence="1">NAD(P)H-quinone oxidoreductase subunit I, chloroplastic</fullName>
        <ecNumber evidence="1">7.1.1.-</ecNumber>
    </recommendedName>
    <alternativeName>
        <fullName evidence="1">NAD(P)H dehydrogenase subunit I</fullName>
        <shortName evidence="1">NDH subunit I</shortName>
    </alternativeName>
    <alternativeName>
        <fullName evidence="1">NADH-plastoquinone oxidoreductase subunit I</fullName>
    </alternativeName>
</protein>
<reference key="1">
    <citation type="journal article" date="2002" name="Proc. Natl. Acad. Sci. U.S.A.">
        <title>The chloroplast and mitochondrial genome sequences of the charophyte Chaetosphaeridium globosum: insights into the timing of the events that restructured organelle DNAs within the green algal lineage that led to land plants.</title>
        <authorList>
            <person name="Turmel M."/>
            <person name="Otis C."/>
            <person name="Lemieux C."/>
        </authorList>
    </citation>
    <scope>NUCLEOTIDE SEQUENCE [LARGE SCALE GENOMIC DNA]</scope>
    <source>
        <strain>M1311</strain>
    </source>
</reference>
<comment type="function">
    <text evidence="1">NDH shuttles electrons from NAD(P)H:plastoquinone, via FMN and iron-sulfur (Fe-S) centers, to quinones in the photosynthetic chain and possibly in a chloroplast respiratory chain. The immediate electron acceptor for the enzyme in this species is believed to be plastoquinone. Couples the redox reaction to proton translocation, and thus conserves the redox energy in a proton gradient.</text>
</comment>
<comment type="catalytic activity">
    <reaction evidence="1">
        <text>a plastoquinone + NADH + (n+1) H(+)(in) = a plastoquinol + NAD(+) + n H(+)(out)</text>
        <dbReference type="Rhea" id="RHEA:42608"/>
        <dbReference type="Rhea" id="RHEA-COMP:9561"/>
        <dbReference type="Rhea" id="RHEA-COMP:9562"/>
        <dbReference type="ChEBI" id="CHEBI:15378"/>
        <dbReference type="ChEBI" id="CHEBI:17757"/>
        <dbReference type="ChEBI" id="CHEBI:57540"/>
        <dbReference type="ChEBI" id="CHEBI:57945"/>
        <dbReference type="ChEBI" id="CHEBI:62192"/>
    </reaction>
</comment>
<comment type="catalytic activity">
    <reaction evidence="1">
        <text>a plastoquinone + NADPH + (n+1) H(+)(in) = a plastoquinol + NADP(+) + n H(+)(out)</text>
        <dbReference type="Rhea" id="RHEA:42612"/>
        <dbReference type="Rhea" id="RHEA-COMP:9561"/>
        <dbReference type="Rhea" id="RHEA-COMP:9562"/>
        <dbReference type="ChEBI" id="CHEBI:15378"/>
        <dbReference type="ChEBI" id="CHEBI:17757"/>
        <dbReference type="ChEBI" id="CHEBI:57783"/>
        <dbReference type="ChEBI" id="CHEBI:58349"/>
        <dbReference type="ChEBI" id="CHEBI:62192"/>
    </reaction>
</comment>
<comment type="cofactor">
    <cofactor evidence="1">
        <name>[4Fe-4S] cluster</name>
        <dbReference type="ChEBI" id="CHEBI:49883"/>
    </cofactor>
    <text evidence="1">Binds 2 [4Fe-4S] clusters per subunit.</text>
</comment>
<comment type="subunit">
    <text evidence="1">NDH is composed of at least 16 different subunits, 5 of which are encoded in the nucleus.</text>
</comment>
<comment type="subcellular location">
    <subcellularLocation>
        <location evidence="1">Plastid</location>
        <location evidence="1">Chloroplast thylakoid membrane</location>
        <topology evidence="1">Peripheral membrane protein</topology>
    </subcellularLocation>
</comment>
<comment type="similarity">
    <text evidence="1">Belongs to the complex I 23 kDa subunit family.</text>
</comment>
<evidence type="ECO:0000255" key="1">
    <source>
        <dbReference type="HAMAP-Rule" id="MF_01351"/>
    </source>
</evidence>
<proteinExistence type="inferred from homology"/>
<sequence>MFTGVQNYTQEVIKAAKYIGQGFTITLDHMNRLPVTIQYPYEKLIPSERFRGRIHFEFDKCIACEVCVRVCPINLPVVDWEFQKSIKKKQLKSYSIDFGVCIFCGNCVEYCPTNCLSMTEEYELSVYDRHELNYDHIALGRLPISSIKDPMVYGVNGLSYLEKNIIQDNTNKDTVTGPYNKE</sequence>
<dbReference type="EC" id="7.1.1.-" evidence="1"/>
<dbReference type="EMBL" id="AF494278">
    <property type="protein sequence ID" value="AAM96522.1"/>
    <property type="molecule type" value="Genomic_DNA"/>
</dbReference>
<dbReference type="RefSeq" id="NP_683856.1">
    <property type="nucleotide sequence ID" value="NC_004115.1"/>
</dbReference>
<dbReference type="SMR" id="Q8M9T7"/>
<dbReference type="GeneID" id="860804"/>
<dbReference type="GO" id="GO:0009535">
    <property type="term" value="C:chloroplast thylakoid membrane"/>
    <property type="evidence" value="ECO:0007669"/>
    <property type="project" value="UniProtKB-SubCell"/>
</dbReference>
<dbReference type="GO" id="GO:0051539">
    <property type="term" value="F:4 iron, 4 sulfur cluster binding"/>
    <property type="evidence" value="ECO:0007669"/>
    <property type="project" value="UniProtKB-KW"/>
</dbReference>
<dbReference type="GO" id="GO:0005506">
    <property type="term" value="F:iron ion binding"/>
    <property type="evidence" value="ECO:0007669"/>
    <property type="project" value="UniProtKB-UniRule"/>
</dbReference>
<dbReference type="GO" id="GO:0008137">
    <property type="term" value="F:NADH dehydrogenase (ubiquinone) activity"/>
    <property type="evidence" value="ECO:0007669"/>
    <property type="project" value="InterPro"/>
</dbReference>
<dbReference type="GO" id="GO:0048038">
    <property type="term" value="F:quinone binding"/>
    <property type="evidence" value="ECO:0007669"/>
    <property type="project" value="UniProtKB-KW"/>
</dbReference>
<dbReference type="GO" id="GO:0019684">
    <property type="term" value="P:photosynthesis, light reaction"/>
    <property type="evidence" value="ECO:0007669"/>
    <property type="project" value="UniProtKB-UniRule"/>
</dbReference>
<dbReference type="Gene3D" id="3.30.70.3270">
    <property type="match status" value="1"/>
</dbReference>
<dbReference type="HAMAP" id="MF_01351">
    <property type="entry name" value="NDH1_NuoI"/>
    <property type="match status" value="1"/>
</dbReference>
<dbReference type="InterPro" id="IPR017896">
    <property type="entry name" value="4Fe4S_Fe-S-bd"/>
</dbReference>
<dbReference type="InterPro" id="IPR017900">
    <property type="entry name" value="4Fe4S_Fe_S_CS"/>
</dbReference>
<dbReference type="InterPro" id="IPR010226">
    <property type="entry name" value="NADH_quinone_OxRdtase_chainI"/>
</dbReference>
<dbReference type="InterPro" id="IPR004497">
    <property type="entry name" value="NDHI"/>
</dbReference>
<dbReference type="NCBIfam" id="TIGR00403">
    <property type="entry name" value="ndhI"/>
    <property type="match status" value="1"/>
</dbReference>
<dbReference type="NCBIfam" id="TIGR01971">
    <property type="entry name" value="NuoI"/>
    <property type="match status" value="1"/>
</dbReference>
<dbReference type="NCBIfam" id="NF004537">
    <property type="entry name" value="PRK05888.1-3"/>
    <property type="match status" value="1"/>
</dbReference>
<dbReference type="PANTHER" id="PTHR47275">
    <property type="entry name" value="NAD(P)H-QUINONE OXIDOREDUCTASE SUBUNIT I, CHLOROPLASTIC"/>
    <property type="match status" value="1"/>
</dbReference>
<dbReference type="PANTHER" id="PTHR47275:SF1">
    <property type="entry name" value="NAD(P)H-QUINONE OXIDOREDUCTASE SUBUNIT I, CHLOROPLASTIC"/>
    <property type="match status" value="1"/>
</dbReference>
<dbReference type="Pfam" id="PF12838">
    <property type="entry name" value="Fer4_7"/>
    <property type="match status" value="1"/>
</dbReference>
<dbReference type="SUPFAM" id="SSF54862">
    <property type="entry name" value="4Fe-4S ferredoxins"/>
    <property type="match status" value="1"/>
</dbReference>
<dbReference type="PROSITE" id="PS00198">
    <property type="entry name" value="4FE4S_FER_1"/>
    <property type="match status" value="2"/>
</dbReference>
<dbReference type="PROSITE" id="PS51379">
    <property type="entry name" value="4FE4S_FER_2"/>
    <property type="match status" value="2"/>
</dbReference>
<feature type="chain" id="PRO_0000245655" description="NAD(P)H-quinone oxidoreductase subunit I, chloroplastic">
    <location>
        <begin position="1"/>
        <end position="182"/>
    </location>
</feature>
<feature type="domain" description="4Fe-4S ferredoxin-type 1" evidence="1">
    <location>
        <begin position="52"/>
        <end position="81"/>
    </location>
</feature>
<feature type="domain" description="4Fe-4S ferredoxin-type 2" evidence="1">
    <location>
        <begin position="92"/>
        <end position="121"/>
    </location>
</feature>
<feature type="binding site" evidence="1">
    <location>
        <position position="61"/>
    </location>
    <ligand>
        <name>[4Fe-4S] cluster</name>
        <dbReference type="ChEBI" id="CHEBI:49883"/>
        <label>1</label>
    </ligand>
</feature>
<feature type="binding site" evidence="1">
    <location>
        <position position="64"/>
    </location>
    <ligand>
        <name>[4Fe-4S] cluster</name>
        <dbReference type="ChEBI" id="CHEBI:49883"/>
        <label>1</label>
    </ligand>
</feature>
<feature type="binding site" evidence="1">
    <location>
        <position position="67"/>
    </location>
    <ligand>
        <name>[4Fe-4S] cluster</name>
        <dbReference type="ChEBI" id="CHEBI:49883"/>
        <label>1</label>
    </ligand>
</feature>
<feature type="binding site" evidence="1">
    <location>
        <position position="71"/>
    </location>
    <ligand>
        <name>[4Fe-4S] cluster</name>
        <dbReference type="ChEBI" id="CHEBI:49883"/>
        <label>2</label>
    </ligand>
</feature>
<feature type="binding site" evidence="1">
    <location>
        <position position="101"/>
    </location>
    <ligand>
        <name>[4Fe-4S] cluster</name>
        <dbReference type="ChEBI" id="CHEBI:49883"/>
        <label>2</label>
    </ligand>
</feature>
<feature type="binding site" evidence="1">
    <location>
        <position position="104"/>
    </location>
    <ligand>
        <name>[4Fe-4S] cluster</name>
        <dbReference type="ChEBI" id="CHEBI:49883"/>
        <label>2</label>
    </ligand>
</feature>
<feature type="binding site" evidence="1">
    <location>
        <position position="107"/>
    </location>
    <ligand>
        <name>[4Fe-4S] cluster</name>
        <dbReference type="ChEBI" id="CHEBI:49883"/>
        <label>2</label>
    </ligand>
</feature>
<feature type="binding site" evidence="1">
    <location>
        <position position="111"/>
    </location>
    <ligand>
        <name>[4Fe-4S] cluster</name>
        <dbReference type="ChEBI" id="CHEBI:49883"/>
        <label>1</label>
    </ligand>
</feature>
<keyword id="KW-0004">4Fe-4S</keyword>
<keyword id="KW-0150">Chloroplast</keyword>
<keyword id="KW-0408">Iron</keyword>
<keyword id="KW-0411">Iron-sulfur</keyword>
<keyword id="KW-0472">Membrane</keyword>
<keyword id="KW-0479">Metal-binding</keyword>
<keyword id="KW-0520">NAD</keyword>
<keyword id="KW-0521">NADP</keyword>
<keyword id="KW-0934">Plastid</keyword>
<keyword id="KW-0618">Plastoquinone</keyword>
<keyword id="KW-0874">Quinone</keyword>
<keyword id="KW-0677">Repeat</keyword>
<keyword id="KW-0793">Thylakoid</keyword>
<keyword id="KW-1278">Translocase</keyword>
<name>NDHI_CHAGL</name>
<gene>
    <name evidence="1" type="primary">ndhI</name>
</gene>
<accession>Q8M9T7</accession>